<feature type="chain" id="PRO_0000165871" description="Chloramphenicol acetyltransferase">
    <location>
        <begin position="1"/>
        <end position="215"/>
    </location>
</feature>
<feature type="active site" description="Proton acceptor" evidence="1">
    <location>
        <position position="189"/>
    </location>
</feature>
<evidence type="ECO:0000255" key="1">
    <source>
        <dbReference type="PROSITE-ProRule" id="PRU10021"/>
    </source>
</evidence>
<evidence type="ECO:0000305" key="2"/>
<name>CAT2_STAAU</name>
<comment type="function">
    <text>This enzyme is an effector of chloramphenicol resistance in bacteria.</text>
</comment>
<comment type="catalytic activity">
    <reaction evidence="1">
        <text>chloramphenicol + acetyl-CoA = chloramphenicol 3-acetate + CoA</text>
        <dbReference type="Rhea" id="RHEA:18421"/>
        <dbReference type="ChEBI" id="CHEBI:16730"/>
        <dbReference type="ChEBI" id="CHEBI:17698"/>
        <dbReference type="ChEBI" id="CHEBI:57287"/>
        <dbReference type="ChEBI" id="CHEBI:57288"/>
        <dbReference type="EC" id="2.3.1.28"/>
    </reaction>
</comment>
<comment type="subunit">
    <text>Homotrimer.</text>
</comment>
<comment type="similarity">
    <text evidence="2">Belongs to the chloramphenicol acetyltransferase family.</text>
</comment>
<organism>
    <name type="scientific">Staphylococcus aureus</name>
    <dbReference type="NCBI Taxonomy" id="1280"/>
    <lineage>
        <taxon>Bacteria</taxon>
        <taxon>Bacillati</taxon>
        <taxon>Bacillota</taxon>
        <taxon>Bacilli</taxon>
        <taxon>Bacillales</taxon>
        <taxon>Staphylococcaceae</taxon>
        <taxon>Staphylococcus</taxon>
    </lineage>
</organism>
<protein>
    <recommendedName>
        <fullName>Chloramphenicol acetyltransferase</fullName>
        <shortName>CAT</shortName>
        <ecNumber>2.3.1.28</ecNumber>
    </recommendedName>
</protein>
<dbReference type="EC" id="2.3.1.28"/>
<dbReference type="EMBL" id="M16192">
    <property type="protein sequence ID" value="AAA72572.1"/>
    <property type="molecule type" value="Genomic_DNA"/>
</dbReference>
<dbReference type="EMBL" id="X02166">
    <property type="protein sequence ID" value="CAA26105.1"/>
    <property type="molecule type" value="Genomic_DNA"/>
</dbReference>
<dbReference type="EMBL" id="X02529">
    <property type="protein sequence ID" value="CAA26367.1"/>
    <property type="molecule type" value="Genomic_DNA"/>
</dbReference>
<dbReference type="PIR" id="A00569">
    <property type="entry name" value="XXSAC2"/>
</dbReference>
<dbReference type="RefSeq" id="NP_052694.1">
    <property type="nucleotide sequence ID" value="NC_002129.1"/>
</dbReference>
<dbReference type="RefSeq" id="YP_001595586.1">
    <property type="nucleotide sequence ID" value="NC_010111.1"/>
</dbReference>
<dbReference type="RefSeq" id="YP_232727.1">
    <property type="nucleotide sequence ID" value="NC_006977.1"/>
</dbReference>
<dbReference type="SMR" id="P00486"/>
<dbReference type="KEGG" id="ag:CAA26367"/>
<dbReference type="GO" id="GO:0008811">
    <property type="term" value="F:chloramphenicol O-acetyltransferase activity"/>
    <property type="evidence" value="ECO:0007669"/>
    <property type="project" value="UniProtKB-EC"/>
</dbReference>
<dbReference type="GO" id="GO:0046677">
    <property type="term" value="P:response to antibiotic"/>
    <property type="evidence" value="ECO:0007669"/>
    <property type="project" value="UniProtKB-KW"/>
</dbReference>
<dbReference type="Gene3D" id="3.30.559.10">
    <property type="entry name" value="Chloramphenicol acetyltransferase-like domain"/>
    <property type="match status" value="1"/>
</dbReference>
<dbReference type="InterPro" id="IPR023213">
    <property type="entry name" value="CAT-like_dom_sf"/>
</dbReference>
<dbReference type="InterPro" id="IPR018372">
    <property type="entry name" value="Chloramphenicol_AcTrfase_AS"/>
</dbReference>
<dbReference type="InterPro" id="IPR001707">
    <property type="entry name" value="Cmp_AcTrfase"/>
</dbReference>
<dbReference type="NCBIfam" id="NF000491">
    <property type="entry name" value="chloram_CatA"/>
    <property type="match status" value="1"/>
</dbReference>
<dbReference type="PANTHER" id="PTHR38474:SF2">
    <property type="entry name" value="CHLORAMPHENICOL ACETYLTRANSFERASE"/>
    <property type="match status" value="1"/>
</dbReference>
<dbReference type="PANTHER" id="PTHR38474">
    <property type="entry name" value="SLR0299 PROTEIN"/>
    <property type="match status" value="1"/>
</dbReference>
<dbReference type="Pfam" id="PF00302">
    <property type="entry name" value="CAT"/>
    <property type="match status" value="1"/>
</dbReference>
<dbReference type="PIRSF" id="PIRSF000440">
    <property type="entry name" value="CAT"/>
    <property type="match status" value="1"/>
</dbReference>
<dbReference type="SMART" id="SM01059">
    <property type="entry name" value="CAT"/>
    <property type="match status" value="1"/>
</dbReference>
<dbReference type="SUPFAM" id="SSF52777">
    <property type="entry name" value="CoA-dependent acyltransferases"/>
    <property type="match status" value="1"/>
</dbReference>
<dbReference type="PROSITE" id="PS00100">
    <property type="entry name" value="CAT"/>
    <property type="match status" value="1"/>
</dbReference>
<geneLocation type="plasmid">
    <name>pC221</name>
</geneLocation>
<geneLocation type="plasmid">
    <name>pTZ12</name>
</geneLocation>
<gene>
    <name type="primary">cat</name>
</gene>
<keyword id="KW-0012">Acyltransferase</keyword>
<keyword id="KW-0046">Antibiotic resistance</keyword>
<keyword id="KW-0614">Plasmid</keyword>
<keyword id="KW-0808">Transferase</keyword>
<proteinExistence type="inferred from homology"/>
<sequence length="215" mass="25745">MTFNIIKLENWDRKEYFEHYFNQQTTYSITKEIDITLFKDMIKKKGYEIYPSLIYAIMEVVNKNKVFRTGINSENKLGYWDKLNPLYTVFNKQTEKFTNIWTESDNNFTSFYNNYKNDLLEYKDKEEMFPKKPIPENTIPISMIPWIDFSSFNLNIGNNSNFLLPIITIGKFYSENNKIYIPVALQLHHAVCDGYHASLFMNEFQDIIHKVDDWI</sequence>
<accession>P00486</accession>
<reference key="1">
    <citation type="journal article" date="1985" name="FEBS Lett.">
        <title>Chloramphenicol acetyltransferase gene of staphylococcal plasmid pC221. Nucleotide sequence analysis and expression studies.</title>
        <authorList>
            <person name="Shaw W.V."/>
            <person name="Brenner D.G."/>
            <person name="Legrice S.F.J."/>
            <person name="Skinner S.E."/>
            <person name="Hawkins A.R."/>
        </authorList>
    </citation>
    <scope>NUCLEOTIDE SEQUENCE [GENOMIC DNA]</scope>
    <source>
        <plasmid>pC221</plasmid>
    </source>
</reference>
<reference key="2">
    <citation type="journal article" date="1985" name="EMBO J.">
        <title>The use of synthetic oligonucleotides with universal templates for rapid DNA sequencing: results with staphylococcal replicon pC221.</title>
        <authorList>
            <person name="Brenner D.G."/>
            <person name="Shaw W.V."/>
        </authorList>
    </citation>
    <scope>NUCLEOTIDE SEQUENCE [GENOMIC DNA]</scope>
    <source>
        <plasmid>pC221</plasmid>
    </source>
</reference>
<reference key="3">
    <citation type="journal article" date="1985" name="Mol. Gen. Genet.">
        <title>Comparative sequence and functional analysis of pT181 and pC221, cognate plasmid replicons from Staphylococcus aureus.</title>
        <authorList>
            <person name="Projan S.J."/>
            <person name="Kornblum J."/>
            <person name="Moghazeh S.L."/>
            <person name="Edelman I."/>
            <person name="Gennaro M.L."/>
            <person name="Novick R.P."/>
        </authorList>
    </citation>
    <scope>NUCLEOTIDE SEQUENCE [GENOMIC DNA]</scope>
    <source>
        <plasmid>pC221</plasmid>
    </source>
</reference>
<reference key="4">
    <citation type="journal article" date="1987" name="Gene">
        <title>Complete nucleotide sequence of pTZ12, a chloramphenicol-resistance plasmid of Bacillus subtilis.</title>
        <authorList>
            <person name="Aoki T."/>
            <person name="Noguchi N."/>
            <person name="Sasatsu M."/>
            <person name="Kono M."/>
        </authorList>
    </citation>
    <scope>NUCLEOTIDE SEQUENCE [GENOMIC DNA]</scope>
    <source>
        <plasmid>pTZ12</plasmid>
    </source>
</reference>